<protein>
    <recommendedName>
        <fullName evidence="3">Probable ATP-dependent helicase YpvA</fullName>
        <ecNumber evidence="1">5.6.2.3</ecNumber>
    </recommendedName>
</protein>
<proteinExistence type="inferred from homology"/>
<organism>
    <name type="scientific">Bacillus subtilis (strain 168)</name>
    <dbReference type="NCBI Taxonomy" id="224308"/>
    <lineage>
        <taxon>Bacteria</taxon>
        <taxon>Bacillati</taxon>
        <taxon>Bacillota</taxon>
        <taxon>Bacilli</taxon>
        <taxon>Bacillales</taxon>
        <taxon>Bacillaceae</taxon>
        <taxon>Bacillus</taxon>
    </lineage>
</organism>
<reference key="1">
    <citation type="journal article" date="1996" name="Microbiology">
        <title>Sequence analysis of the Bacillus subtilis chromosome region between the serA and kdg loci cloned in a yeast artificial chromosome.</title>
        <authorList>
            <person name="Sorokin A.V."/>
            <person name="Azevedo V."/>
            <person name="Zumstein E."/>
            <person name="Galleron N."/>
            <person name="Ehrlich S.D."/>
            <person name="Serror P."/>
        </authorList>
    </citation>
    <scope>NUCLEOTIDE SEQUENCE [GENOMIC DNA]</scope>
    <source>
        <strain>168 / Marburg / ATCC 6051 / DSM 10 / JCM 1465 / NBRC 13719 / NCIMB 3610 / NRRL NRS-744 / VKM B-501</strain>
    </source>
</reference>
<reference key="2">
    <citation type="journal article" date="1997" name="Nature">
        <title>The complete genome sequence of the Gram-positive bacterium Bacillus subtilis.</title>
        <authorList>
            <person name="Kunst F."/>
            <person name="Ogasawara N."/>
            <person name="Moszer I."/>
            <person name="Albertini A.M."/>
            <person name="Alloni G."/>
            <person name="Azevedo V."/>
            <person name="Bertero M.G."/>
            <person name="Bessieres P."/>
            <person name="Bolotin A."/>
            <person name="Borchert S."/>
            <person name="Borriss R."/>
            <person name="Boursier L."/>
            <person name="Brans A."/>
            <person name="Braun M."/>
            <person name="Brignell S.C."/>
            <person name="Bron S."/>
            <person name="Brouillet S."/>
            <person name="Bruschi C.V."/>
            <person name="Caldwell B."/>
            <person name="Capuano V."/>
            <person name="Carter N.M."/>
            <person name="Choi S.-K."/>
            <person name="Codani J.-J."/>
            <person name="Connerton I.F."/>
            <person name="Cummings N.J."/>
            <person name="Daniel R.A."/>
            <person name="Denizot F."/>
            <person name="Devine K.M."/>
            <person name="Duesterhoeft A."/>
            <person name="Ehrlich S.D."/>
            <person name="Emmerson P.T."/>
            <person name="Entian K.-D."/>
            <person name="Errington J."/>
            <person name="Fabret C."/>
            <person name="Ferrari E."/>
            <person name="Foulger D."/>
            <person name="Fritz C."/>
            <person name="Fujita M."/>
            <person name="Fujita Y."/>
            <person name="Fuma S."/>
            <person name="Galizzi A."/>
            <person name="Galleron N."/>
            <person name="Ghim S.-Y."/>
            <person name="Glaser P."/>
            <person name="Goffeau A."/>
            <person name="Golightly E.J."/>
            <person name="Grandi G."/>
            <person name="Guiseppi G."/>
            <person name="Guy B.J."/>
            <person name="Haga K."/>
            <person name="Haiech J."/>
            <person name="Harwood C.R."/>
            <person name="Henaut A."/>
            <person name="Hilbert H."/>
            <person name="Holsappel S."/>
            <person name="Hosono S."/>
            <person name="Hullo M.-F."/>
            <person name="Itaya M."/>
            <person name="Jones L.-M."/>
            <person name="Joris B."/>
            <person name="Karamata D."/>
            <person name="Kasahara Y."/>
            <person name="Klaerr-Blanchard M."/>
            <person name="Klein C."/>
            <person name="Kobayashi Y."/>
            <person name="Koetter P."/>
            <person name="Koningstein G."/>
            <person name="Krogh S."/>
            <person name="Kumano M."/>
            <person name="Kurita K."/>
            <person name="Lapidus A."/>
            <person name="Lardinois S."/>
            <person name="Lauber J."/>
            <person name="Lazarevic V."/>
            <person name="Lee S.-M."/>
            <person name="Levine A."/>
            <person name="Liu H."/>
            <person name="Masuda S."/>
            <person name="Mauel C."/>
            <person name="Medigue C."/>
            <person name="Medina N."/>
            <person name="Mellado R.P."/>
            <person name="Mizuno M."/>
            <person name="Moestl D."/>
            <person name="Nakai S."/>
            <person name="Noback M."/>
            <person name="Noone D."/>
            <person name="O'Reilly M."/>
            <person name="Ogawa K."/>
            <person name="Ogiwara A."/>
            <person name="Oudega B."/>
            <person name="Park S.-H."/>
            <person name="Parro V."/>
            <person name="Pohl T.M."/>
            <person name="Portetelle D."/>
            <person name="Porwollik S."/>
            <person name="Prescott A.M."/>
            <person name="Presecan E."/>
            <person name="Pujic P."/>
            <person name="Purnelle B."/>
            <person name="Rapoport G."/>
            <person name="Rey M."/>
            <person name="Reynolds S."/>
            <person name="Rieger M."/>
            <person name="Rivolta C."/>
            <person name="Rocha E."/>
            <person name="Roche B."/>
            <person name="Rose M."/>
            <person name="Sadaie Y."/>
            <person name="Sato T."/>
            <person name="Scanlan E."/>
            <person name="Schleich S."/>
            <person name="Schroeter R."/>
            <person name="Scoffone F."/>
            <person name="Sekiguchi J."/>
            <person name="Sekowska A."/>
            <person name="Seror S.J."/>
            <person name="Serror P."/>
            <person name="Shin B.-S."/>
            <person name="Soldo B."/>
            <person name="Sorokin A."/>
            <person name="Tacconi E."/>
            <person name="Takagi T."/>
            <person name="Takahashi H."/>
            <person name="Takemaru K."/>
            <person name="Takeuchi M."/>
            <person name="Tamakoshi A."/>
            <person name="Tanaka T."/>
            <person name="Terpstra P."/>
            <person name="Tognoni A."/>
            <person name="Tosato V."/>
            <person name="Uchiyama S."/>
            <person name="Vandenbol M."/>
            <person name="Vannier F."/>
            <person name="Vassarotti A."/>
            <person name="Viari A."/>
            <person name="Wambutt R."/>
            <person name="Wedler E."/>
            <person name="Wedler H."/>
            <person name="Weitzenegger T."/>
            <person name="Winters P."/>
            <person name="Wipat A."/>
            <person name="Yamamoto H."/>
            <person name="Yamane K."/>
            <person name="Yasumoto K."/>
            <person name="Yata K."/>
            <person name="Yoshida K."/>
            <person name="Yoshikawa H.-F."/>
            <person name="Zumstein E."/>
            <person name="Yoshikawa H."/>
            <person name="Danchin A."/>
        </authorList>
    </citation>
    <scope>NUCLEOTIDE SEQUENCE [LARGE SCALE GENOMIC DNA]</scope>
    <source>
        <strain>168</strain>
    </source>
</reference>
<sequence length="641" mass="74300">MTTSRLPFSLTKTKNFYEELNNWIGDVFYDILPEKGFDLRDEQVFMAFQLERAFKEKKVMFAEAGVGTGKTLVYLLFAISYARYVGKPAIIACADETLIEQLVKKEGDISKLAEHLDLKIDTRLSKSHEQYLCLKKLEKTMQRSDDDKWLDLYESLPSFVHESQAMQRFYPYGDRKQYANLSNEEWSDVSYDSFQDCLTCDMRHRCGLTLSRDYYRKSTDLIICSHDFYMEHVWTEESRKREGQLPLLPDHSAVVFDEGHLLEFAAQKALTYRVKQSTLELFLERLLQNDIREEFAELIEDALLANDEFFYVLSEESKEVAGSHRLEIKNDHRVKKAADELCRLLDKIGEALVFESEMYTIDQYELSVVEEYVEQMAYSLSLYQKDAISWLEKKEAESTFVVMPRTVAEVLGEKVFSKKIPYIFSSATLSEGGSFDYIADSLGIHDYLSLTVDSPYDYDEQMSINLYAKTDMDAEQKTAETIETIKRYKGRTLVLFPSFEELNEFKELSAAWELPYPIFFEGDEEISSLVEKFQEEEETVLCSVHLWEGLDIPGDALKNVTIWSLPFPPHDPVFTAKRNGAKKDPFEEVDLPYMLLRVRQGIGRLIRSNQDSGSIHIYAGGENERIIDEVKKVLPVEPHMM</sequence>
<dbReference type="EC" id="5.6.2.3" evidence="1"/>
<dbReference type="EMBL" id="L47838">
    <property type="protein sequence ID" value="AAB38475.1"/>
    <property type="molecule type" value="Genomic_DNA"/>
</dbReference>
<dbReference type="EMBL" id="AL009126">
    <property type="protein sequence ID" value="CAB14132.1"/>
    <property type="molecule type" value="Genomic_DNA"/>
</dbReference>
<dbReference type="PIR" id="C69943">
    <property type="entry name" value="C69943"/>
</dbReference>
<dbReference type="RefSeq" id="NP_390097.1">
    <property type="nucleotide sequence ID" value="NC_000964.3"/>
</dbReference>
<dbReference type="RefSeq" id="WP_003230718.1">
    <property type="nucleotide sequence ID" value="NZ_OZ025638.1"/>
</dbReference>
<dbReference type="SMR" id="P50831"/>
<dbReference type="FunCoup" id="P50831">
    <property type="interactions" value="1"/>
</dbReference>
<dbReference type="STRING" id="224308.BSU22150"/>
<dbReference type="PaxDb" id="224308-BSU22150"/>
<dbReference type="EnsemblBacteria" id="CAB14132">
    <property type="protein sequence ID" value="CAB14132"/>
    <property type="gene ID" value="BSU_22150"/>
</dbReference>
<dbReference type="GeneID" id="939060"/>
<dbReference type="KEGG" id="bsu:BSU22150"/>
<dbReference type="PATRIC" id="fig|224308.179.peg.2419"/>
<dbReference type="eggNOG" id="COG1199">
    <property type="taxonomic scope" value="Bacteria"/>
</dbReference>
<dbReference type="InParanoid" id="P50831"/>
<dbReference type="OrthoDB" id="9803913at2"/>
<dbReference type="PhylomeDB" id="P50831"/>
<dbReference type="BioCyc" id="BSUB:BSU22150-MONOMER"/>
<dbReference type="Proteomes" id="UP000001570">
    <property type="component" value="Chromosome"/>
</dbReference>
<dbReference type="GO" id="GO:0005524">
    <property type="term" value="F:ATP binding"/>
    <property type="evidence" value="ECO:0007669"/>
    <property type="project" value="UniProtKB-KW"/>
</dbReference>
<dbReference type="GO" id="GO:0016887">
    <property type="term" value="F:ATP hydrolysis activity"/>
    <property type="evidence" value="ECO:0007669"/>
    <property type="project" value="RHEA"/>
</dbReference>
<dbReference type="GO" id="GO:0003677">
    <property type="term" value="F:DNA binding"/>
    <property type="evidence" value="ECO:0007669"/>
    <property type="project" value="UniProtKB-KW"/>
</dbReference>
<dbReference type="GO" id="GO:0003678">
    <property type="term" value="F:DNA helicase activity"/>
    <property type="evidence" value="ECO:0000318"/>
    <property type="project" value="GO_Central"/>
</dbReference>
<dbReference type="GO" id="GO:0051536">
    <property type="term" value="F:iron-sulfur cluster binding"/>
    <property type="evidence" value="ECO:0007669"/>
    <property type="project" value="UniProtKB-KW"/>
</dbReference>
<dbReference type="GO" id="GO:0046872">
    <property type="term" value="F:metal ion binding"/>
    <property type="evidence" value="ECO:0007669"/>
    <property type="project" value="UniProtKB-KW"/>
</dbReference>
<dbReference type="GO" id="GO:0006139">
    <property type="term" value="P:nucleobase-containing compound metabolic process"/>
    <property type="evidence" value="ECO:0007669"/>
    <property type="project" value="InterPro"/>
</dbReference>
<dbReference type="FunFam" id="3.40.50.300:FF:001940">
    <property type="entry name" value="ATP-dependent DNA helicase"/>
    <property type="match status" value="1"/>
</dbReference>
<dbReference type="FunFam" id="3.40.50.300:FF:002244">
    <property type="entry name" value="ATP-dependent DNA helicase"/>
    <property type="match status" value="1"/>
</dbReference>
<dbReference type="Gene3D" id="3.40.50.300">
    <property type="entry name" value="P-loop containing nucleotide triphosphate hydrolases"/>
    <property type="match status" value="2"/>
</dbReference>
<dbReference type="InterPro" id="IPR006555">
    <property type="entry name" value="ATP-dep_Helicase_C"/>
</dbReference>
<dbReference type="InterPro" id="IPR045028">
    <property type="entry name" value="DinG/Rad3-like"/>
</dbReference>
<dbReference type="InterPro" id="IPR014013">
    <property type="entry name" value="Helic_SF1/SF2_ATP-bd_DinG/Rad3"/>
</dbReference>
<dbReference type="InterPro" id="IPR027417">
    <property type="entry name" value="P-loop_NTPase"/>
</dbReference>
<dbReference type="PANTHER" id="PTHR11472:SF57">
    <property type="entry name" value="ATP-DEPENDENT HELICASE YPVA-RELATED"/>
    <property type="match status" value="1"/>
</dbReference>
<dbReference type="PANTHER" id="PTHR11472">
    <property type="entry name" value="DNA REPAIR DEAD HELICASE RAD3/XP-D SUBFAMILY MEMBER"/>
    <property type="match status" value="1"/>
</dbReference>
<dbReference type="Pfam" id="PF13307">
    <property type="entry name" value="Helicase_C_2"/>
    <property type="match status" value="1"/>
</dbReference>
<dbReference type="SMART" id="SM00491">
    <property type="entry name" value="HELICc2"/>
    <property type="match status" value="1"/>
</dbReference>
<dbReference type="SUPFAM" id="SSF52540">
    <property type="entry name" value="P-loop containing nucleoside triphosphate hydrolases"/>
    <property type="match status" value="1"/>
</dbReference>
<dbReference type="PROSITE" id="PS51193">
    <property type="entry name" value="HELICASE_ATP_BIND_2"/>
    <property type="match status" value="1"/>
</dbReference>
<gene>
    <name type="primary">ypvA</name>
    <name type="ordered locus">BSU22150</name>
</gene>
<accession>P50831</accession>
<name>YPVA_BACSU</name>
<keyword id="KW-0067">ATP-binding</keyword>
<keyword id="KW-0238">DNA-binding</keyword>
<keyword id="KW-0347">Helicase</keyword>
<keyword id="KW-0378">Hydrolase</keyword>
<keyword id="KW-0408">Iron</keyword>
<keyword id="KW-0411">Iron-sulfur</keyword>
<keyword id="KW-0413">Isomerase</keyword>
<keyword id="KW-0479">Metal-binding</keyword>
<keyword id="KW-0547">Nucleotide-binding</keyword>
<keyword id="KW-1185">Reference proteome</keyword>
<feature type="chain" id="PRO_0000102008" description="Probable ATP-dependent helicase YpvA">
    <location>
        <begin position="1"/>
        <end position="641"/>
    </location>
</feature>
<feature type="domain" description="Helicase ATP-binding" evidence="2">
    <location>
        <begin position="29"/>
        <end position="303"/>
    </location>
</feature>
<feature type="short sequence motif" description="DEGH box">
    <location>
        <begin position="257"/>
        <end position="260"/>
    </location>
</feature>
<feature type="binding site" evidence="2">
    <location>
        <begin position="64"/>
        <end position="71"/>
    </location>
    <ligand>
        <name>ATP</name>
        <dbReference type="ChEBI" id="CHEBI:30616"/>
    </ligand>
</feature>
<feature type="binding site" evidence="1">
    <location>
        <position position="133"/>
    </location>
    <ligand>
        <name>[4Fe-4S] cluster</name>
        <dbReference type="ChEBI" id="CHEBI:49883"/>
    </ligand>
</feature>
<feature type="binding site" evidence="1">
    <location>
        <position position="197"/>
    </location>
    <ligand>
        <name>[4Fe-4S] cluster</name>
        <dbReference type="ChEBI" id="CHEBI:49883"/>
    </ligand>
</feature>
<feature type="binding site" evidence="1">
    <location>
        <position position="200"/>
    </location>
    <ligand>
        <name>[4Fe-4S] cluster</name>
        <dbReference type="ChEBI" id="CHEBI:49883"/>
    </ligand>
</feature>
<feature type="binding site" evidence="1">
    <location>
        <position position="206"/>
    </location>
    <ligand>
        <name>[4Fe-4S] cluster</name>
        <dbReference type="ChEBI" id="CHEBI:49883"/>
    </ligand>
</feature>
<comment type="function">
    <text evidence="1">Might be a 5'-3' DNA helicase.</text>
</comment>
<comment type="catalytic activity">
    <reaction evidence="1">
        <text>Couples ATP hydrolysis with the unwinding of duplex DNA at the replication fork by translocating in the 5'-3' direction. This creates two antiparallel DNA single strands (ssDNA). The leading ssDNA polymer is the template for DNA polymerase III holoenzyme which synthesizes a continuous strand.</text>
        <dbReference type="EC" id="5.6.2.3"/>
    </reaction>
</comment>
<comment type="catalytic activity">
    <reaction evidence="1">
        <text>ATP + H2O = ADP + phosphate + H(+)</text>
        <dbReference type="Rhea" id="RHEA:13065"/>
        <dbReference type="ChEBI" id="CHEBI:15377"/>
        <dbReference type="ChEBI" id="CHEBI:15378"/>
        <dbReference type="ChEBI" id="CHEBI:30616"/>
        <dbReference type="ChEBI" id="CHEBI:43474"/>
        <dbReference type="ChEBI" id="CHEBI:456216"/>
        <dbReference type="EC" id="5.6.2.3"/>
    </reaction>
</comment>
<comment type="cofactor">
    <cofactor evidence="1">
        <name>[4Fe-4S] cluster</name>
        <dbReference type="ChEBI" id="CHEBI:49883"/>
    </cofactor>
    <text evidence="1">Binds 1 [4Fe-4S] cluster.</text>
</comment>
<comment type="similarity">
    <text evidence="3">Belongs to the helicase family. DinG subfamily.</text>
</comment>
<evidence type="ECO:0000250" key="1">
    <source>
        <dbReference type="UniProtKB" id="P27296"/>
    </source>
</evidence>
<evidence type="ECO:0000255" key="2">
    <source>
        <dbReference type="PROSITE-ProRule" id="PRU00541"/>
    </source>
</evidence>
<evidence type="ECO:0000305" key="3"/>